<organism>
    <name type="scientific">Dinoroseobacter shibae (strain DSM 16493 / NCIMB 14021 / DFL 12)</name>
    <dbReference type="NCBI Taxonomy" id="398580"/>
    <lineage>
        <taxon>Bacteria</taxon>
        <taxon>Pseudomonadati</taxon>
        <taxon>Pseudomonadota</taxon>
        <taxon>Alphaproteobacteria</taxon>
        <taxon>Rhodobacterales</taxon>
        <taxon>Roseobacteraceae</taxon>
        <taxon>Dinoroseobacter</taxon>
    </lineage>
</organism>
<dbReference type="EC" id="5.3.1.6" evidence="1"/>
<dbReference type="EMBL" id="CP000830">
    <property type="protein sequence ID" value="ABV94471.1"/>
    <property type="molecule type" value="Genomic_DNA"/>
</dbReference>
<dbReference type="RefSeq" id="WP_012179399.1">
    <property type="nucleotide sequence ID" value="NC_009952.1"/>
</dbReference>
<dbReference type="SMR" id="A8LIN0"/>
<dbReference type="STRING" id="398580.Dshi_2738"/>
<dbReference type="KEGG" id="dsh:Dshi_2738"/>
<dbReference type="eggNOG" id="COG0120">
    <property type="taxonomic scope" value="Bacteria"/>
</dbReference>
<dbReference type="HOGENOM" id="CLU_056590_1_0_5"/>
<dbReference type="OrthoDB" id="5870696at2"/>
<dbReference type="UniPathway" id="UPA00115">
    <property type="reaction ID" value="UER00412"/>
</dbReference>
<dbReference type="Proteomes" id="UP000006833">
    <property type="component" value="Chromosome"/>
</dbReference>
<dbReference type="GO" id="GO:0005829">
    <property type="term" value="C:cytosol"/>
    <property type="evidence" value="ECO:0007669"/>
    <property type="project" value="TreeGrafter"/>
</dbReference>
<dbReference type="GO" id="GO:0004751">
    <property type="term" value="F:ribose-5-phosphate isomerase activity"/>
    <property type="evidence" value="ECO:0007669"/>
    <property type="project" value="UniProtKB-UniRule"/>
</dbReference>
<dbReference type="GO" id="GO:0006014">
    <property type="term" value="P:D-ribose metabolic process"/>
    <property type="evidence" value="ECO:0007669"/>
    <property type="project" value="TreeGrafter"/>
</dbReference>
<dbReference type="GO" id="GO:0009052">
    <property type="term" value="P:pentose-phosphate shunt, non-oxidative branch"/>
    <property type="evidence" value="ECO:0007669"/>
    <property type="project" value="UniProtKB-UniRule"/>
</dbReference>
<dbReference type="CDD" id="cd01398">
    <property type="entry name" value="RPI_A"/>
    <property type="match status" value="1"/>
</dbReference>
<dbReference type="FunFam" id="3.40.50.1360:FF:000001">
    <property type="entry name" value="Ribose-5-phosphate isomerase A"/>
    <property type="match status" value="1"/>
</dbReference>
<dbReference type="Gene3D" id="3.30.70.260">
    <property type="match status" value="1"/>
</dbReference>
<dbReference type="Gene3D" id="3.40.50.1360">
    <property type="match status" value="1"/>
</dbReference>
<dbReference type="HAMAP" id="MF_00170">
    <property type="entry name" value="Rib_5P_isom_A"/>
    <property type="match status" value="1"/>
</dbReference>
<dbReference type="InterPro" id="IPR037171">
    <property type="entry name" value="NagB/RpiA_transferase-like"/>
</dbReference>
<dbReference type="InterPro" id="IPR020672">
    <property type="entry name" value="Ribose5P_isomerase_typA_subgr"/>
</dbReference>
<dbReference type="InterPro" id="IPR004788">
    <property type="entry name" value="Ribose5P_isomerase_type_A"/>
</dbReference>
<dbReference type="NCBIfam" id="NF001924">
    <property type="entry name" value="PRK00702.1"/>
    <property type="match status" value="1"/>
</dbReference>
<dbReference type="NCBIfam" id="TIGR00021">
    <property type="entry name" value="rpiA"/>
    <property type="match status" value="1"/>
</dbReference>
<dbReference type="PANTHER" id="PTHR11934">
    <property type="entry name" value="RIBOSE-5-PHOSPHATE ISOMERASE"/>
    <property type="match status" value="1"/>
</dbReference>
<dbReference type="PANTHER" id="PTHR11934:SF0">
    <property type="entry name" value="RIBOSE-5-PHOSPHATE ISOMERASE"/>
    <property type="match status" value="1"/>
</dbReference>
<dbReference type="Pfam" id="PF06026">
    <property type="entry name" value="Rib_5-P_isom_A"/>
    <property type="match status" value="1"/>
</dbReference>
<dbReference type="SUPFAM" id="SSF75445">
    <property type="entry name" value="D-ribose-5-phosphate isomerase (RpiA), lid domain"/>
    <property type="match status" value="1"/>
</dbReference>
<dbReference type="SUPFAM" id="SSF100950">
    <property type="entry name" value="NagB/RpiA/CoA transferase-like"/>
    <property type="match status" value="1"/>
</dbReference>
<gene>
    <name evidence="1" type="primary">rpiA</name>
    <name type="ordered locus">Dshi_2738</name>
</gene>
<accession>A8LIN0</accession>
<feature type="chain" id="PRO_1000077065" description="Ribose-5-phosphate isomerase A">
    <location>
        <begin position="1"/>
        <end position="260"/>
    </location>
</feature>
<feature type="active site" description="Proton acceptor" evidence="1">
    <location>
        <position position="111"/>
    </location>
</feature>
<feature type="binding site" evidence="1">
    <location>
        <begin position="33"/>
        <end position="36"/>
    </location>
    <ligand>
        <name>substrate</name>
    </ligand>
</feature>
<feature type="binding site" evidence="1">
    <location>
        <begin position="89"/>
        <end position="92"/>
    </location>
    <ligand>
        <name>substrate</name>
    </ligand>
</feature>
<feature type="binding site" evidence="1">
    <location>
        <begin position="102"/>
        <end position="105"/>
    </location>
    <ligand>
        <name>substrate</name>
    </ligand>
</feature>
<feature type="binding site" evidence="1">
    <location>
        <position position="129"/>
    </location>
    <ligand>
        <name>substrate</name>
    </ligand>
</feature>
<evidence type="ECO:0000255" key="1">
    <source>
        <dbReference type="HAMAP-Rule" id="MF_00170"/>
    </source>
</evidence>
<keyword id="KW-0413">Isomerase</keyword>
<keyword id="KW-1185">Reference proteome</keyword>
<name>RPIA_DINSH</name>
<protein>
    <recommendedName>
        <fullName evidence="1">Ribose-5-phosphate isomerase A</fullName>
        <ecNumber evidence="1">5.3.1.6</ecNumber>
    </recommendedName>
    <alternativeName>
        <fullName evidence="1">Phosphoriboisomerase A</fullName>
        <shortName evidence="1">PRI</shortName>
    </alternativeName>
</protein>
<sequence length="260" mass="28080">MSGEMSPIDRAKYVAAKRAVGFVEDGMRVGLGTGSTAAWMVRHLAETVDQEGMDITCVATSTRTAELARDLKLHVTTLDEVKWLDLTIDGADEFDPTLNLIKGGGGALLQEKIVATASDRMIVITDASKAVATLGAFPLPVEVIRFGWETTRTLIEETLVNVDVGGREAILRMENGMPYVTDEGNFIVDLHLERIGNPRQVSLVLNQLPGVVENGLFLDICDVVVIGKSDGSVELRDINEGSVHQEQVEVTATGNVFSDL</sequence>
<reference key="1">
    <citation type="journal article" date="2010" name="ISME J.">
        <title>The complete genome sequence of the algal symbiont Dinoroseobacter shibae: a hitchhiker's guide to life in the sea.</title>
        <authorList>
            <person name="Wagner-Dobler I."/>
            <person name="Ballhausen B."/>
            <person name="Berger M."/>
            <person name="Brinkhoff T."/>
            <person name="Buchholz I."/>
            <person name="Bunk B."/>
            <person name="Cypionka H."/>
            <person name="Daniel R."/>
            <person name="Drepper T."/>
            <person name="Gerdts G."/>
            <person name="Hahnke S."/>
            <person name="Han C."/>
            <person name="Jahn D."/>
            <person name="Kalhoefer D."/>
            <person name="Kiss H."/>
            <person name="Klenk H.P."/>
            <person name="Kyrpides N."/>
            <person name="Liebl W."/>
            <person name="Liesegang H."/>
            <person name="Meincke L."/>
            <person name="Pati A."/>
            <person name="Petersen J."/>
            <person name="Piekarski T."/>
            <person name="Pommerenke C."/>
            <person name="Pradella S."/>
            <person name="Pukall R."/>
            <person name="Rabus R."/>
            <person name="Stackebrandt E."/>
            <person name="Thole S."/>
            <person name="Thompson L."/>
            <person name="Tielen P."/>
            <person name="Tomasch J."/>
            <person name="von Jan M."/>
            <person name="Wanphrut N."/>
            <person name="Wichels A."/>
            <person name="Zech H."/>
            <person name="Simon M."/>
        </authorList>
    </citation>
    <scope>NUCLEOTIDE SEQUENCE [LARGE SCALE GENOMIC DNA]</scope>
    <source>
        <strain>DSM 16493 / NCIMB 14021 / DFL 12</strain>
    </source>
</reference>
<comment type="function">
    <text evidence="1">Catalyzes the reversible conversion of ribose-5-phosphate to ribulose 5-phosphate.</text>
</comment>
<comment type="catalytic activity">
    <reaction evidence="1">
        <text>aldehydo-D-ribose 5-phosphate = D-ribulose 5-phosphate</text>
        <dbReference type="Rhea" id="RHEA:14657"/>
        <dbReference type="ChEBI" id="CHEBI:58121"/>
        <dbReference type="ChEBI" id="CHEBI:58273"/>
        <dbReference type="EC" id="5.3.1.6"/>
    </reaction>
</comment>
<comment type="pathway">
    <text evidence="1">Carbohydrate degradation; pentose phosphate pathway; D-ribose 5-phosphate from D-ribulose 5-phosphate (non-oxidative stage): step 1/1.</text>
</comment>
<comment type="subunit">
    <text evidence="1">Homodimer.</text>
</comment>
<comment type="similarity">
    <text evidence="1">Belongs to the ribose 5-phosphate isomerase family.</text>
</comment>
<proteinExistence type="inferred from homology"/>